<name>MHPD_ECO55</name>
<proteinExistence type="inferred from homology"/>
<sequence>MTKHTLEQLAADLRRAAEQGEAIAPLRDLIGIDNAEAAYAIQHINVQYDVAQGRRVVGRKVGLTHPKVQQQLGVDQPDFGTLFADMCYGDNEIIPFSRVLQARIEAEIALVLNRDLPATDITFDELYNAIEWVLPALEVVGSRIRDWSIQFVDTVADNASCGVYVIGGPAQRPAGLDLKNCAMKMTRNNEEVSSGRGSECLGHPLNAAVWLARKMASLGEPLRAGDIILTGALGPMVAVNAGDRFEAHIEGIGSVAATFSSAAPKGSLS</sequence>
<feature type="chain" id="PRO_1000187020" description="2-keto-4-pentenoate hydratase">
    <location>
        <begin position="1"/>
        <end position="269"/>
    </location>
</feature>
<comment type="function">
    <text evidence="1">Catalyzes the conversion of 2-hydroxypentadienoic acid (enolic form of 2-oxopent-4-enoate) to 4-hydroxy-2-ketopentanoic acid.</text>
</comment>
<comment type="catalytic activity">
    <reaction evidence="1">
        <text>(S)-4-hydroxy-2-oxopentanoate = (2Z)-2-hydroxypenta-2,4-dienoate + H2O</text>
        <dbReference type="Rhea" id="RHEA:22580"/>
        <dbReference type="ChEBI" id="CHEBI:15377"/>
        <dbReference type="ChEBI" id="CHEBI:67152"/>
        <dbReference type="ChEBI" id="CHEBI:73143"/>
        <dbReference type="EC" id="4.2.1.80"/>
    </reaction>
</comment>
<comment type="cofactor">
    <cofactor evidence="1">
        <name>a divalent metal cation</name>
        <dbReference type="ChEBI" id="CHEBI:60240"/>
    </cofactor>
</comment>
<comment type="pathway">
    <text evidence="1">Aromatic compound metabolism; 3-phenylpropanoate degradation.</text>
</comment>
<comment type="similarity">
    <text evidence="1">Belongs to the hydratase/decarboxylase family. MhpD subfamily.</text>
</comment>
<protein>
    <recommendedName>
        <fullName evidence="1">2-keto-4-pentenoate hydratase</fullName>
        <ecNumber evidence="1">4.2.1.80</ecNumber>
    </recommendedName>
    <alternativeName>
        <fullName evidence="1">2-hydroxypentadienoic acid hydratase</fullName>
    </alternativeName>
</protein>
<organism>
    <name type="scientific">Escherichia coli (strain 55989 / EAEC)</name>
    <dbReference type="NCBI Taxonomy" id="585055"/>
    <lineage>
        <taxon>Bacteria</taxon>
        <taxon>Pseudomonadati</taxon>
        <taxon>Pseudomonadota</taxon>
        <taxon>Gammaproteobacteria</taxon>
        <taxon>Enterobacterales</taxon>
        <taxon>Enterobacteriaceae</taxon>
        <taxon>Escherichia</taxon>
    </lineage>
</organism>
<accession>B7L506</accession>
<keyword id="KW-0058">Aromatic hydrocarbons catabolism</keyword>
<keyword id="KW-0456">Lyase</keyword>
<keyword id="KW-1185">Reference proteome</keyword>
<dbReference type="EC" id="4.2.1.80" evidence="1"/>
<dbReference type="EMBL" id="CU928145">
    <property type="protein sequence ID" value="CAU96234.1"/>
    <property type="molecule type" value="Genomic_DNA"/>
</dbReference>
<dbReference type="RefSeq" id="WP_000160720.1">
    <property type="nucleotide sequence ID" value="NC_011748.1"/>
</dbReference>
<dbReference type="SMR" id="B7L506"/>
<dbReference type="KEGG" id="eck:EC55989_0357"/>
<dbReference type="HOGENOM" id="CLU_060136_4_1_6"/>
<dbReference type="UniPathway" id="UPA00714"/>
<dbReference type="Proteomes" id="UP000000746">
    <property type="component" value="Chromosome"/>
</dbReference>
<dbReference type="GO" id="GO:0005737">
    <property type="term" value="C:cytoplasm"/>
    <property type="evidence" value="ECO:0007669"/>
    <property type="project" value="TreeGrafter"/>
</dbReference>
<dbReference type="GO" id="GO:0008684">
    <property type="term" value="F:2-oxopent-4-enoate hydratase activity"/>
    <property type="evidence" value="ECO:0007669"/>
    <property type="project" value="UniProtKB-UniRule"/>
</dbReference>
<dbReference type="GO" id="GO:0030145">
    <property type="term" value="F:manganese ion binding"/>
    <property type="evidence" value="ECO:0007669"/>
    <property type="project" value="InterPro"/>
</dbReference>
<dbReference type="GO" id="GO:0019380">
    <property type="term" value="P:3-phenylpropionate catabolic process"/>
    <property type="evidence" value="ECO:0007669"/>
    <property type="project" value="UniProtKB-UniRule"/>
</dbReference>
<dbReference type="FunFam" id="3.90.850.10:FF:000006">
    <property type="entry name" value="2-keto-4-pentenoate hydratase"/>
    <property type="match status" value="1"/>
</dbReference>
<dbReference type="Gene3D" id="3.90.850.10">
    <property type="entry name" value="Fumarylacetoacetase-like, C-terminal domain"/>
    <property type="match status" value="1"/>
</dbReference>
<dbReference type="HAMAP" id="MF_01655">
    <property type="entry name" value="MhpD"/>
    <property type="match status" value="1"/>
</dbReference>
<dbReference type="InterPro" id="IPR011234">
    <property type="entry name" value="Fumarylacetoacetase-like_C"/>
</dbReference>
<dbReference type="InterPro" id="IPR036663">
    <property type="entry name" value="Fumarylacetoacetase_C_sf"/>
</dbReference>
<dbReference type="InterPro" id="IPR050772">
    <property type="entry name" value="Hydratase-Decarb/MhpD_sf"/>
</dbReference>
<dbReference type="InterPro" id="IPR023793">
    <property type="entry name" value="Keto_pentenoate-hydratase"/>
</dbReference>
<dbReference type="NCBIfam" id="NF008461">
    <property type="entry name" value="PRK11342.1"/>
    <property type="match status" value="1"/>
</dbReference>
<dbReference type="PANTHER" id="PTHR30143:SF0">
    <property type="entry name" value="2-KETO-4-PENTENOATE HYDRATASE"/>
    <property type="match status" value="1"/>
</dbReference>
<dbReference type="PANTHER" id="PTHR30143">
    <property type="entry name" value="ACID HYDRATASE"/>
    <property type="match status" value="1"/>
</dbReference>
<dbReference type="Pfam" id="PF01557">
    <property type="entry name" value="FAA_hydrolase"/>
    <property type="match status" value="1"/>
</dbReference>
<dbReference type="SUPFAM" id="SSF56529">
    <property type="entry name" value="FAH"/>
    <property type="match status" value="1"/>
</dbReference>
<reference key="1">
    <citation type="journal article" date="2009" name="PLoS Genet.">
        <title>Organised genome dynamics in the Escherichia coli species results in highly diverse adaptive paths.</title>
        <authorList>
            <person name="Touchon M."/>
            <person name="Hoede C."/>
            <person name="Tenaillon O."/>
            <person name="Barbe V."/>
            <person name="Baeriswyl S."/>
            <person name="Bidet P."/>
            <person name="Bingen E."/>
            <person name="Bonacorsi S."/>
            <person name="Bouchier C."/>
            <person name="Bouvet O."/>
            <person name="Calteau A."/>
            <person name="Chiapello H."/>
            <person name="Clermont O."/>
            <person name="Cruveiller S."/>
            <person name="Danchin A."/>
            <person name="Diard M."/>
            <person name="Dossat C."/>
            <person name="Karoui M.E."/>
            <person name="Frapy E."/>
            <person name="Garry L."/>
            <person name="Ghigo J.M."/>
            <person name="Gilles A.M."/>
            <person name="Johnson J."/>
            <person name="Le Bouguenec C."/>
            <person name="Lescat M."/>
            <person name="Mangenot S."/>
            <person name="Martinez-Jehanne V."/>
            <person name="Matic I."/>
            <person name="Nassif X."/>
            <person name="Oztas S."/>
            <person name="Petit M.A."/>
            <person name="Pichon C."/>
            <person name="Rouy Z."/>
            <person name="Ruf C.S."/>
            <person name="Schneider D."/>
            <person name="Tourret J."/>
            <person name="Vacherie B."/>
            <person name="Vallenet D."/>
            <person name="Medigue C."/>
            <person name="Rocha E.P.C."/>
            <person name="Denamur E."/>
        </authorList>
    </citation>
    <scope>NUCLEOTIDE SEQUENCE [LARGE SCALE GENOMIC DNA]</scope>
    <source>
        <strain>55989 / EAEC</strain>
    </source>
</reference>
<gene>
    <name evidence="1" type="primary">mhpD</name>
    <name type="ordered locus">EC55989_0357</name>
</gene>
<evidence type="ECO:0000255" key="1">
    <source>
        <dbReference type="HAMAP-Rule" id="MF_01655"/>
    </source>
</evidence>